<reference key="1">
    <citation type="journal article" date="2008" name="J. Bacteriol.">
        <title>Complete genome sequence of uropathogenic Proteus mirabilis, a master of both adherence and motility.</title>
        <authorList>
            <person name="Pearson M.M."/>
            <person name="Sebaihia M."/>
            <person name="Churcher C."/>
            <person name="Quail M.A."/>
            <person name="Seshasayee A.S."/>
            <person name="Luscombe N.M."/>
            <person name="Abdellah Z."/>
            <person name="Arrosmith C."/>
            <person name="Atkin B."/>
            <person name="Chillingworth T."/>
            <person name="Hauser H."/>
            <person name="Jagels K."/>
            <person name="Moule S."/>
            <person name="Mungall K."/>
            <person name="Norbertczak H."/>
            <person name="Rabbinowitsch E."/>
            <person name="Walker D."/>
            <person name="Whithead S."/>
            <person name="Thomson N.R."/>
            <person name="Rather P.N."/>
            <person name="Parkhill J."/>
            <person name="Mobley H.L.T."/>
        </authorList>
    </citation>
    <scope>NUCLEOTIDE SEQUENCE [LARGE SCALE GENOMIC DNA]</scope>
    <source>
        <strain>HI4320</strain>
    </source>
</reference>
<sequence length="404" mass="44904">MKLPIYLDYSATTPVDPRVAEKMMQCLTIDGIFGNPASRSHRFGWQAEEAIDIARNQIADLIGADPREIVFTSGATEADNLALKGVANFYQKKGKHIITSKTEHKAILDTCRQLEREGFEVTYLAPKSDGLIDLKELEAAMRDDTILVSIMHVNNEIGVVQDIAAIGELCRSKGIIYHVDATQSVGKLPIDLSKLKVDLLSLSAHKVYGPMGIGALYVRRKPRIRLEAQMHGGGHERGMRSGTLAVHQIVGMGEAYRILKEEMADETKRLNELRLRLWNGIKDIEEVYINGSLEHTAPNILNVSFNYVEGESLMMALKDLAVSSGSACTSASLEPSYVLRALGLTDELAHSSIRFSLGRFTTEEEIDYAIEQIHSAIGRLRDLSPLWEMHKQGVDINSIEWSHH</sequence>
<dbReference type="EC" id="2.8.1.7" evidence="1"/>
<dbReference type="EMBL" id="AM942759">
    <property type="protein sequence ID" value="CAR43855.1"/>
    <property type="molecule type" value="Genomic_DNA"/>
</dbReference>
<dbReference type="RefSeq" id="WP_004243849.1">
    <property type="nucleotide sequence ID" value="NC_010554.1"/>
</dbReference>
<dbReference type="SMR" id="B4EZU8"/>
<dbReference type="EnsemblBacteria" id="CAR43855">
    <property type="protein sequence ID" value="CAR43855"/>
    <property type="gene ID" value="PMI1860"/>
</dbReference>
<dbReference type="GeneID" id="6800090"/>
<dbReference type="KEGG" id="pmr:PMI1860"/>
<dbReference type="eggNOG" id="COG1104">
    <property type="taxonomic scope" value="Bacteria"/>
</dbReference>
<dbReference type="HOGENOM" id="CLU_003433_0_2_6"/>
<dbReference type="UniPathway" id="UPA00266"/>
<dbReference type="Proteomes" id="UP000008319">
    <property type="component" value="Chromosome"/>
</dbReference>
<dbReference type="GO" id="GO:1990221">
    <property type="term" value="C:L-cysteine desulfurase complex"/>
    <property type="evidence" value="ECO:0007669"/>
    <property type="project" value="UniProtKB-ARBA"/>
</dbReference>
<dbReference type="GO" id="GO:0051537">
    <property type="term" value="F:2 iron, 2 sulfur cluster binding"/>
    <property type="evidence" value="ECO:0007669"/>
    <property type="project" value="UniProtKB-UniRule"/>
</dbReference>
<dbReference type="GO" id="GO:0031071">
    <property type="term" value="F:cysteine desulfurase activity"/>
    <property type="evidence" value="ECO:0007669"/>
    <property type="project" value="UniProtKB-UniRule"/>
</dbReference>
<dbReference type="GO" id="GO:0046872">
    <property type="term" value="F:metal ion binding"/>
    <property type="evidence" value="ECO:0007669"/>
    <property type="project" value="UniProtKB-KW"/>
</dbReference>
<dbReference type="GO" id="GO:0030170">
    <property type="term" value="F:pyridoxal phosphate binding"/>
    <property type="evidence" value="ECO:0007669"/>
    <property type="project" value="UniProtKB-UniRule"/>
</dbReference>
<dbReference type="GO" id="GO:0044571">
    <property type="term" value="P:[2Fe-2S] cluster assembly"/>
    <property type="evidence" value="ECO:0007669"/>
    <property type="project" value="UniProtKB-UniRule"/>
</dbReference>
<dbReference type="FunFam" id="3.40.640.10:FF:000003">
    <property type="entry name" value="Cysteine desulfurase IscS"/>
    <property type="match status" value="1"/>
</dbReference>
<dbReference type="FunFam" id="3.90.1150.10:FF:000002">
    <property type="entry name" value="Cysteine desulfurase IscS"/>
    <property type="match status" value="1"/>
</dbReference>
<dbReference type="Gene3D" id="3.90.1150.10">
    <property type="entry name" value="Aspartate Aminotransferase, domain 1"/>
    <property type="match status" value="1"/>
</dbReference>
<dbReference type="Gene3D" id="3.40.640.10">
    <property type="entry name" value="Type I PLP-dependent aspartate aminotransferase-like (Major domain)"/>
    <property type="match status" value="1"/>
</dbReference>
<dbReference type="HAMAP" id="MF_00331">
    <property type="entry name" value="Cys_desulf_IscS"/>
    <property type="match status" value="1"/>
</dbReference>
<dbReference type="InterPro" id="IPR000192">
    <property type="entry name" value="Aminotrans_V_dom"/>
</dbReference>
<dbReference type="InterPro" id="IPR020578">
    <property type="entry name" value="Aminotrans_V_PyrdxlP_BS"/>
</dbReference>
<dbReference type="InterPro" id="IPR010240">
    <property type="entry name" value="Cys_deSase_IscS"/>
</dbReference>
<dbReference type="InterPro" id="IPR016454">
    <property type="entry name" value="Cysteine_dSase"/>
</dbReference>
<dbReference type="InterPro" id="IPR015424">
    <property type="entry name" value="PyrdxlP-dep_Trfase"/>
</dbReference>
<dbReference type="InterPro" id="IPR015421">
    <property type="entry name" value="PyrdxlP-dep_Trfase_major"/>
</dbReference>
<dbReference type="InterPro" id="IPR015422">
    <property type="entry name" value="PyrdxlP-dep_Trfase_small"/>
</dbReference>
<dbReference type="NCBIfam" id="TIGR02006">
    <property type="entry name" value="IscS"/>
    <property type="match status" value="1"/>
</dbReference>
<dbReference type="NCBIfam" id="NF002806">
    <property type="entry name" value="PRK02948.1"/>
    <property type="match status" value="1"/>
</dbReference>
<dbReference type="NCBIfam" id="NF010611">
    <property type="entry name" value="PRK14012.1"/>
    <property type="match status" value="1"/>
</dbReference>
<dbReference type="PANTHER" id="PTHR11601:SF34">
    <property type="entry name" value="CYSTEINE DESULFURASE"/>
    <property type="match status" value="1"/>
</dbReference>
<dbReference type="PANTHER" id="PTHR11601">
    <property type="entry name" value="CYSTEINE DESULFURYLASE FAMILY MEMBER"/>
    <property type="match status" value="1"/>
</dbReference>
<dbReference type="Pfam" id="PF00266">
    <property type="entry name" value="Aminotran_5"/>
    <property type="match status" value="1"/>
</dbReference>
<dbReference type="PIRSF" id="PIRSF005572">
    <property type="entry name" value="NifS"/>
    <property type="match status" value="1"/>
</dbReference>
<dbReference type="SUPFAM" id="SSF53383">
    <property type="entry name" value="PLP-dependent transferases"/>
    <property type="match status" value="1"/>
</dbReference>
<dbReference type="PROSITE" id="PS00595">
    <property type="entry name" value="AA_TRANSFER_CLASS_5"/>
    <property type="match status" value="1"/>
</dbReference>
<protein>
    <recommendedName>
        <fullName evidence="1">Cysteine desulfurase IscS</fullName>
        <ecNumber evidence="1">2.8.1.7</ecNumber>
    </recommendedName>
</protein>
<organism>
    <name type="scientific">Proteus mirabilis (strain HI4320)</name>
    <dbReference type="NCBI Taxonomy" id="529507"/>
    <lineage>
        <taxon>Bacteria</taxon>
        <taxon>Pseudomonadati</taxon>
        <taxon>Pseudomonadota</taxon>
        <taxon>Gammaproteobacteria</taxon>
        <taxon>Enterobacterales</taxon>
        <taxon>Morganellaceae</taxon>
        <taxon>Proteus</taxon>
    </lineage>
</organism>
<proteinExistence type="inferred from homology"/>
<evidence type="ECO:0000255" key="1">
    <source>
        <dbReference type="HAMAP-Rule" id="MF_00331"/>
    </source>
</evidence>
<comment type="function">
    <text evidence="1">Master enzyme that delivers sulfur to a number of partners involved in Fe-S cluster assembly, tRNA modification or cofactor biosynthesis. Catalyzes the removal of elemental sulfur atoms from cysteine to produce alanine. Functions as a sulfur delivery protein for Fe-S cluster synthesis onto IscU, an Fe-S scaffold assembly protein, as well as other S acceptor proteins.</text>
</comment>
<comment type="catalytic activity">
    <reaction evidence="1">
        <text>(sulfur carrier)-H + L-cysteine = (sulfur carrier)-SH + L-alanine</text>
        <dbReference type="Rhea" id="RHEA:43892"/>
        <dbReference type="Rhea" id="RHEA-COMP:14737"/>
        <dbReference type="Rhea" id="RHEA-COMP:14739"/>
        <dbReference type="ChEBI" id="CHEBI:29917"/>
        <dbReference type="ChEBI" id="CHEBI:35235"/>
        <dbReference type="ChEBI" id="CHEBI:57972"/>
        <dbReference type="ChEBI" id="CHEBI:64428"/>
        <dbReference type="EC" id="2.8.1.7"/>
    </reaction>
</comment>
<comment type="cofactor">
    <cofactor evidence="1">
        <name>pyridoxal 5'-phosphate</name>
        <dbReference type="ChEBI" id="CHEBI:597326"/>
    </cofactor>
</comment>
<comment type="pathway">
    <text evidence="1">Cofactor biosynthesis; iron-sulfur cluster biosynthesis.</text>
</comment>
<comment type="subunit">
    <text evidence="1">Homodimer. Forms a heterotetramer with IscU, interacts with other sulfur acceptors.</text>
</comment>
<comment type="subcellular location">
    <subcellularLocation>
        <location evidence="1">Cytoplasm</location>
    </subcellularLocation>
</comment>
<comment type="similarity">
    <text evidence="1">Belongs to the class-V pyridoxal-phosphate-dependent aminotransferase family. NifS/IscS subfamily.</text>
</comment>
<keyword id="KW-0001">2Fe-2S</keyword>
<keyword id="KW-0963">Cytoplasm</keyword>
<keyword id="KW-0408">Iron</keyword>
<keyword id="KW-0411">Iron-sulfur</keyword>
<keyword id="KW-0479">Metal-binding</keyword>
<keyword id="KW-0663">Pyridoxal phosphate</keyword>
<keyword id="KW-1185">Reference proteome</keyword>
<keyword id="KW-0808">Transferase</keyword>
<name>ISCS_PROMH</name>
<accession>B4EZU8</accession>
<gene>
    <name evidence="1" type="primary">iscS</name>
    <name type="ordered locus">PMI1860</name>
</gene>
<feature type="chain" id="PRO_1000119635" description="Cysteine desulfurase IscS">
    <location>
        <begin position="1"/>
        <end position="404"/>
    </location>
</feature>
<feature type="active site" description="Cysteine persulfide intermediate" evidence="1">
    <location>
        <position position="328"/>
    </location>
</feature>
<feature type="binding site" evidence="1">
    <location>
        <begin position="75"/>
        <end position="76"/>
    </location>
    <ligand>
        <name>pyridoxal 5'-phosphate</name>
        <dbReference type="ChEBI" id="CHEBI:597326"/>
    </ligand>
</feature>
<feature type="binding site" evidence="1">
    <location>
        <position position="155"/>
    </location>
    <ligand>
        <name>pyridoxal 5'-phosphate</name>
        <dbReference type="ChEBI" id="CHEBI:597326"/>
    </ligand>
</feature>
<feature type="binding site" evidence="1">
    <location>
        <position position="183"/>
    </location>
    <ligand>
        <name>pyridoxal 5'-phosphate</name>
        <dbReference type="ChEBI" id="CHEBI:597326"/>
    </ligand>
</feature>
<feature type="binding site" evidence="1">
    <location>
        <begin position="203"/>
        <end position="205"/>
    </location>
    <ligand>
        <name>pyridoxal 5'-phosphate</name>
        <dbReference type="ChEBI" id="CHEBI:597326"/>
    </ligand>
</feature>
<feature type="binding site" evidence="1">
    <location>
        <position position="243"/>
    </location>
    <ligand>
        <name>pyridoxal 5'-phosphate</name>
        <dbReference type="ChEBI" id="CHEBI:597326"/>
    </ligand>
</feature>
<feature type="binding site" description="via persulfide group" evidence="1">
    <location>
        <position position="328"/>
    </location>
    <ligand>
        <name>[2Fe-2S] cluster</name>
        <dbReference type="ChEBI" id="CHEBI:190135"/>
        <note>ligand shared with IscU</note>
    </ligand>
</feature>
<feature type="modified residue" description="N6-(pyridoxal phosphate)lysine" evidence="1">
    <location>
        <position position="206"/>
    </location>
</feature>